<accession>A6ZQJ2</accession>
<gene>
    <name type="primary">GLG2</name>
    <name type="ORF">SCY_3153</name>
</gene>
<sequence>MAKKVAICTLLYSRDYLPGALTLAYQLQKLLKHAVVEDEITLCLLIEKKLFEDEFKPQEIALIRSLFKEIIIIEPLKDQEKSIEKNKANLELLKRPELSHTLLKARLWELVQFDQVLFLDADTLPLNKDFFEILRLYPEQTRFQIAAVPDIGWPDMFNTGVLLLIPDLDMATSLQDFLIKTVSIDGADQGIFNQFFNPICNYSKEVLHKVSPLMEWIRLPFTYNVTMPNYGYQSSPAMNFFQQHIRLIHFIGTFKPWSRNTTDYDDHYYQLWRSTQRELYSECHLSNYFTHLQLGNIETETNFYHEPPCLQDLLNHGTRENQKHVDLDITSVDRNASQKSTAEKHDIEKPTSKPQSAFKFDWESTDYLDRVQRAFPKPDT</sequence>
<protein>
    <recommendedName>
        <fullName>Glycogenin-2</fullName>
        <ecNumber>2.4.1.186</ecNumber>
    </recommendedName>
    <alternativeName>
        <fullName>Glycogen synthesis initiator protein 2</fullName>
    </alternativeName>
    <alternativeName>
        <fullName>Glycogenin glucosyltransferase 2</fullName>
    </alternativeName>
</protein>
<reference key="1">
    <citation type="journal article" date="2007" name="Proc. Natl. Acad. Sci. U.S.A.">
        <title>Genome sequencing and comparative analysis of Saccharomyces cerevisiae strain YJM789.</title>
        <authorList>
            <person name="Wei W."/>
            <person name="McCusker J.H."/>
            <person name="Hyman R.W."/>
            <person name="Jones T."/>
            <person name="Ning Y."/>
            <person name="Cao Z."/>
            <person name="Gu Z."/>
            <person name="Bruno D."/>
            <person name="Miranda M."/>
            <person name="Nguyen M."/>
            <person name="Wilhelmy J."/>
            <person name="Komp C."/>
            <person name="Tamse R."/>
            <person name="Wang X."/>
            <person name="Jia P."/>
            <person name="Luedi P."/>
            <person name="Oefner P.J."/>
            <person name="David L."/>
            <person name="Dietrich F.S."/>
            <person name="Li Y."/>
            <person name="Davis R.W."/>
            <person name="Steinmetz L.M."/>
        </authorList>
    </citation>
    <scope>NUCLEOTIDE SEQUENCE [LARGE SCALE GENOMIC DNA]</scope>
    <source>
        <strain>YJM789</strain>
    </source>
</reference>
<feature type="chain" id="PRO_0000333542" description="Glycogenin-2">
    <location>
        <begin position="1"/>
        <end position="380"/>
    </location>
</feature>
<feature type="region of interest" description="Disordered" evidence="5">
    <location>
        <begin position="331"/>
        <end position="357"/>
    </location>
</feature>
<feature type="compositionally biased region" description="Basic and acidic residues" evidence="5">
    <location>
        <begin position="341"/>
        <end position="351"/>
    </location>
</feature>
<feature type="binding site" evidence="3">
    <location>
        <position position="10"/>
    </location>
    <ligand>
        <name>UDP</name>
        <dbReference type="ChEBI" id="CHEBI:58223"/>
    </ligand>
</feature>
<feature type="binding site" evidence="3">
    <location>
        <position position="10"/>
    </location>
    <ligand>
        <name>UDP-alpha-D-glucose</name>
        <dbReference type="ChEBI" id="CHEBI:58885"/>
    </ligand>
</feature>
<feature type="binding site" evidence="3">
    <location>
        <position position="16"/>
    </location>
    <ligand>
        <name>UDP</name>
        <dbReference type="ChEBI" id="CHEBI:58223"/>
    </ligand>
</feature>
<feature type="binding site" evidence="3">
    <location>
        <position position="16"/>
    </location>
    <ligand>
        <name>UDP-alpha-D-glucose</name>
        <dbReference type="ChEBI" id="CHEBI:58885"/>
    </ligand>
</feature>
<feature type="binding site" evidence="3">
    <location>
        <position position="95"/>
    </location>
    <ligand>
        <name>UDP</name>
        <dbReference type="ChEBI" id="CHEBI:58223"/>
    </ligand>
</feature>
<feature type="binding site" evidence="3">
    <location>
        <position position="95"/>
    </location>
    <ligand>
        <name>UDP-alpha-D-glucose</name>
        <dbReference type="ChEBI" id="CHEBI:58885"/>
    </ligand>
</feature>
<feature type="binding site" evidence="3">
    <location>
        <position position="104"/>
    </location>
    <ligand>
        <name>UDP-alpha-D-glucose</name>
        <dbReference type="ChEBI" id="CHEBI:58885"/>
    </ligand>
</feature>
<feature type="binding site" evidence="3">
    <location>
        <position position="120"/>
    </location>
    <ligand>
        <name>Mn(2+)</name>
        <dbReference type="ChEBI" id="CHEBI:29035"/>
    </ligand>
</feature>
<feature type="binding site" evidence="2">
    <location>
        <position position="120"/>
    </location>
    <ligand>
        <name>UDP</name>
        <dbReference type="ChEBI" id="CHEBI:58223"/>
    </ligand>
</feature>
<feature type="binding site" evidence="3">
    <location>
        <position position="120"/>
    </location>
    <ligand>
        <name>UDP-alpha-D-glucose</name>
        <dbReference type="ChEBI" id="CHEBI:58885"/>
    </ligand>
</feature>
<feature type="binding site" evidence="3">
    <location>
        <position position="121"/>
    </location>
    <ligand>
        <name>UDP</name>
        <dbReference type="ChEBI" id="CHEBI:58223"/>
    </ligand>
</feature>
<feature type="binding site" evidence="3">
    <location>
        <position position="121"/>
    </location>
    <ligand>
        <name>UDP-alpha-D-glucose</name>
        <dbReference type="ChEBI" id="CHEBI:58885"/>
    </ligand>
</feature>
<feature type="binding site" evidence="3">
    <location>
        <position position="122"/>
    </location>
    <ligand>
        <name>Mn(2+)</name>
        <dbReference type="ChEBI" id="CHEBI:29035"/>
    </ligand>
</feature>
<feature type="binding site" evidence="3">
    <location>
        <position position="122"/>
    </location>
    <ligand>
        <name>UDP</name>
        <dbReference type="ChEBI" id="CHEBI:58223"/>
    </ligand>
</feature>
<feature type="binding site" evidence="3">
    <location>
        <position position="122"/>
    </location>
    <ligand>
        <name>UDP-alpha-D-glucose</name>
        <dbReference type="ChEBI" id="CHEBI:58885"/>
    </ligand>
</feature>
<feature type="binding site" evidence="3">
    <location>
        <position position="158"/>
    </location>
    <ligand>
        <name>UDP-alpha-D-glucose</name>
        <dbReference type="ChEBI" id="CHEBI:58885"/>
    </ligand>
</feature>
<feature type="binding site" evidence="3">
    <location>
        <position position="159"/>
    </location>
    <ligand>
        <name>UDP-alpha-D-glucose</name>
        <dbReference type="ChEBI" id="CHEBI:58885"/>
    </ligand>
</feature>
<feature type="binding site" evidence="3">
    <location>
        <position position="185"/>
    </location>
    <ligand>
        <name>UDP-alpha-D-glucose</name>
        <dbReference type="ChEBI" id="CHEBI:58885"/>
    </ligand>
</feature>
<feature type="binding site" evidence="3">
    <location>
        <position position="188"/>
    </location>
    <ligand>
        <name>UDP-alpha-D-glucose</name>
        <dbReference type="ChEBI" id="CHEBI:58885"/>
    </ligand>
</feature>
<feature type="binding site" evidence="3">
    <location>
        <position position="189"/>
    </location>
    <ligand>
        <name>UDP-alpha-D-glucose</name>
        <dbReference type="ChEBI" id="CHEBI:58885"/>
    </ligand>
</feature>
<feature type="binding site" evidence="3">
    <location>
        <position position="249"/>
    </location>
    <ligand>
        <name>Mn(2+)</name>
        <dbReference type="ChEBI" id="CHEBI:29035"/>
    </ligand>
</feature>
<feature type="binding site" evidence="2">
    <location>
        <position position="249"/>
    </location>
    <ligand>
        <name>UDP</name>
        <dbReference type="ChEBI" id="CHEBI:58223"/>
    </ligand>
</feature>
<feature type="binding site" evidence="3">
    <location>
        <position position="252"/>
    </location>
    <ligand>
        <name>UDP</name>
        <dbReference type="ChEBI" id="CHEBI:58223"/>
    </ligand>
</feature>
<feature type="binding site" evidence="3">
    <location>
        <position position="252"/>
    </location>
    <ligand>
        <name>UDP-alpha-D-glucose</name>
        <dbReference type="ChEBI" id="CHEBI:58885"/>
    </ligand>
</feature>
<feature type="binding site" evidence="3">
    <location>
        <position position="255"/>
    </location>
    <ligand>
        <name>UDP</name>
        <dbReference type="ChEBI" id="CHEBI:58223"/>
    </ligand>
</feature>
<feature type="binding site" evidence="3">
    <location>
        <position position="255"/>
    </location>
    <ligand>
        <name>UDP-alpha-D-glucose</name>
        <dbReference type="ChEBI" id="CHEBI:58885"/>
    </ligand>
</feature>
<feature type="site" description="Important for catalytic activity" evidence="2">
    <location>
        <position position="104"/>
    </location>
</feature>
<feature type="glycosylation site" description="O-linked (Glc...) tyrosine" evidence="4">
    <location>
        <position position="230"/>
    </location>
</feature>
<feature type="glycosylation site" description="O-linked (Glc...) tyrosine" evidence="4">
    <location>
        <position position="232"/>
    </location>
</feature>
<feature type="glycosylation site" description="O-linked (Glc...) tyrosine" evidence="4">
    <location>
        <position position="367"/>
    </location>
</feature>
<organism>
    <name type="scientific">Saccharomyces cerevisiae (strain YJM789)</name>
    <name type="common">Baker's yeast</name>
    <dbReference type="NCBI Taxonomy" id="307796"/>
    <lineage>
        <taxon>Eukaryota</taxon>
        <taxon>Fungi</taxon>
        <taxon>Dikarya</taxon>
        <taxon>Ascomycota</taxon>
        <taxon>Saccharomycotina</taxon>
        <taxon>Saccharomycetes</taxon>
        <taxon>Saccharomycetales</taxon>
        <taxon>Saccharomycetaceae</taxon>
        <taxon>Saccharomyces</taxon>
    </lineage>
</organism>
<comment type="function">
    <text evidence="4">Self-glucosylating initiator of glycogen synthesis. It catalyzes the formation of a short alpha (1,4)-glucosyl chain covalently attached via a glucose 1-O-tyrosyl linkage to internal tyrosine residues and these chains act as primers for the elongation reaction catalyzed by glycogen synthase. Capable of transferring glucosyl residues to unbound acceptors such as free oligoglucans or oligoglucan derivatives.</text>
</comment>
<comment type="catalytic activity">
    <reaction evidence="4">
        <text>L-tyrosyl-[glycogenin] + UDP-alpha-D-glucose = alpha-D-glucosyl-L-tyrosyl-[glycogenin] + UDP + H(+)</text>
        <dbReference type="Rhea" id="RHEA:23360"/>
        <dbReference type="Rhea" id="RHEA-COMP:14604"/>
        <dbReference type="Rhea" id="RHEA-COMP:14605"/>
        <dbReference type="ChEBI" id="CHEBI:15378"/>
        <dbReference type="ChEBI" id="CHEBI:46858"/>
        <dbReference type="ChEBI" id="CHEBI:58223"/>
        <dbReference type="ChEBI" id="CHEBI:58885"/>
        <dbReference type="ChEBI" id="CHEBI:140573"/>
        <dbReference type="EC" id="2.4.1.186"/>
    </reaction>
</comment>
<comment type="catalytic activity">
    <reaction evidence="4">
        <text>[1,4-alpha-D-glucosyl](n)-L-tyrosyl-[glycogenin] + UDP-alpha-D-glucose = [1,4-alpha-D-glucosyl](n+1)-L-tyrosyl-[glycogenin] + UDP + H(+)</text>
        <dbReference type="Rhea" id="RHEA:56560"/>
        <dbReference type="Rhea" id="RHEA-COMP:14606"/>
        <dbReference type="Rhea" id="RHEA-COMP:14607"/>
        <dbReference type="ChEBI" id="CHEBI:15378"/>
        <dbReference type="ChEBI" id="CHEBI:58223"/>
        <dbReference type="ChEBI" id="CHEBI:58885"/>
        <dbReference type="ChEBI" id="CHEBI:140574"/>
        <dbReference type="EC" id="2.4.1.186"/>
    </reaction>
</comment>
<comment type="cofactor">
    <cofactor evidence="3">
        <name>Mn(2+)</name>
        <dbReference type="ChEBI" id="CHEBI:29035"/>
    </cofactor>
</comment>
<comment type="subunit">
    <text evidence="4">Interacts with glycogen synthase GSY2.</text>
</comment>
<comment type="subcellular location">
    <subcellularLocation>
        <location evidence="1">Cytoplasm</location>
    </subcellularLocation>
    <subcellularLocation>
        <location evidence="1">Vacuole</location>
    </subcellularLocation>
    <text evidence="1">Localizes to glycogen granules (glycosomes) in the cytoplasm. Localizes to the vacuole during nitrogen starvation-induced glycophagy (autophagy of glycosomes).</text>
</comment>
<comment type="similarity">
    <text evidence="6">Belongs to the glycosyltransferase 8 family. Glycogenin subfamily.</text>
</comment>
<evidence type="ECO:0000250" key="1">
    <source>
        <dbReference type="UniProtKB" id="C4R941"/>
    </source>
</evidence>
<evidence type="ECO:0000250" key="2">
    <source>
        <dbReference type="UniProtKB" id="P13280"/>
    </source>
</evidence>
<evidence type="ECO:0000250" key="3">
    <source>
        <dbReference type="UniProtKB" id="P46976"/>
    </source>
</evidence>
<evidence type="ECO:0000250" key="4">
    <source>
        <dbReference type="UniProtKB" id="P47011"/>
    </source>
</evidence>
<evidence type="ECO:0000256" key="5">
    <source>
        <dbReference type="SAM" id="MobiDB-lite"/>
    </source>
</evidence>
<evidence type="ECO:0000305" key="6"/>
<keyword id="KW-0963">Cytoplasm</keyword>
<keyword id="KW-0320">Glycogen biosynthesis</keyword>
<keyword id="KW-0325">Glycoprotein</keyword>
<keyword id="KW-0464">Manganese</keyword>
<keyword id="KW-0479">Metal-binding</keyword>
<keyword id="KW-0808">Transferase</keyword>
<keyword id="KW-0926">Vacuole</keyword>
<name>GLG2_YEAS7</name>
<dbReference type="EC" id="2.4.1.186"/>
<dbReference type="EMBL" id="AAFW02000044">
    <property type="protein sequence ID" value="EDN63244.1"/>
    <property type="molecule type" value="Genomic_DNA"/>
</dbReference>
<dbReference type="SMR" id="A6ZQJ2"/>
<dbReference type="GlyCosmos" id="A6ZQJ2">
    <property type="glycosylation" value="3 sites, No reported glycans"/>
</dbReference>
<dbReference type="HOGENOM" id="CLU_017171_4_1_1"/>
<dbReference type="OrthoDB" id="16539at4893"/>
<dbReference type="Proteomes" id="UP000007060">
    <property type="component" value="Unassembled WGS sequence"/>
</dbReference>
<dbReference type="GO" id="GO:0005737">
    <property type="term" value="C:cytoplasm"/>
    <property type="evidence" value="ECO:0000250"/>
    <property type="project" value="UniProtKB"/>
</dbReference>
<dbReference type="GO" id="GO:0005773">
    <property type="term" value="C:vacuole"/>
    <property type="evidence" value="ECO:0000250"/>
    <property type="project" value="UniProtKB"/>
</dbReference>
<dbReference type="GO" id="GO:0008466">
    <property type="term" value="F:glycogenin glucosyltransferase activity"/>
    <property type="evidence" value="ECO:0007669"/>
    <property type="project" value="UniProtKB-EC"/>
</dbReference>
<dbReference type="GO" id="GO:0046872">
    <property type="term" value="F:metal ion binding"/>
    <property type="evidence" value="ECO:0007669"/>
    <property type="project" value="UniProtKB-KW"/>
</dbReference>
<dbReference type="GO" id="GO:0005978">
    <property type="term" value="P:glycogen biosynthetic process"/>
    <property type="evidence" value="ECO:0007669"/>
    <property type="project" value="UniProtKB-KW"/>
</dbReference>
<dbReference type="CDD" id="cd02537">
    <property type="entry name" value="GT8_Glycogenin"/>
    <property type="match status" value="1"/>
</dbReference>
<dbReference type="FunFam" id="3.90.550.10:FF:000148">
    <property type="entry name" value="Glg2p"/>
    <property type="match status" value="1"/>
</dbReference>
<dbReference type="Gene3D" id="3.90.550.10">
    <property type="entry name" value="Spore Coat Polysaccharide Biosynthesis Protein SpsA, Chain A"/>
    <property type="match status" value="1"/>
</dbReference>
<dbReference type="InterPro" id="IPR002495">
    <property type="entry name" value="Glyco_trans_8"/>
</dbReference>
<dbReference type="InterPro" id="IPR050587">
    <property type="entry name" value="GNT1/Glycosyltrans_8"/>
</dbReference>
<dbReference type="InterPro" id="IPR029044">
    <property type="entry name" value="Nucleotide-diphossugar_trans"/>
</dbReference>
<dbReference type="PANTHER" id="PTHR11183">
    <property type="entry name" value="GLYCOGENIN SUBFAMILY MEMBER"/>
    <property type="match status" value="1"/>
</dbReference>
<dbReference type="Pfam" id="PF01501">
    <property type="entry name" value="Glyco_transf_8"/>
    <property type="match status" value="1"/>
</dbReference>
<dbReference type="SUPFAM" id="SSF53448">
    <property type="entry name" value="Nucleotide-diphospho-sugar transferases"/>
    <property type="match status" value="1"/>
</dbReference>
<proteinExistence type="inferred from homology"/>